<keyword id="KW-0002">3D-structure</keyword>
<keyword id="KW-0067">ATP-binding</keyword>
<keyword id="KW-0418">Kinase</keyword>
<keyword id="KW-0547">Nucleotide-binding</keyword>
<keyword id="KW-1185">Reference proteome</keyword>
<keyword id="KW-0808">Transferase</keyword>
<feature type="chain" id="PRO_0000080147" description="Pseudouridine kinase">
    <location>
        <begin position="1"/>
        <end position="313"/>
    </location>
</feature>
<feature type="strand" evidence="3">
    <location>
        <begin position="7"/>
        <end position="11"/>
    </location>
</feature>
<feature type="strand" evidence="3">
    <location>
        <begin position="14"/>
        <end position="22"/>
    </location>
</feature>
<feature type="strand" evidence="3">
    <location>
        <begin position="30"/>
        <end position="40"/>
    </location>
</feature>
<feature type="helix" evidence="3">
    <location>
        <begin position="42"/>
        <end position="52"/>
    </location>
</feature>
<feature type="strand" evidence="3">
    <location>
        <begin position="57"/>
        <end position="60"/>
    </location>
</feature>
<feature type="strand" evidence="3">
    <location>
        <begin position="62"/>
        <end position="67"/>
    </location>
</feature>
<feature type="helix" evidence="3">
    <location>
        <begin position="68"/>
        <end position="78"/>
    </location>
</feature>
<feature type="strand" evidence="3">
    <location>
        <begin position="87"/>
        <end position="89"/>
    </location>
</feature>
<feature type="strand" evidence="3">
    <location>
        <begin position="96"/>
        <end position="101"/>
    </location>
</feature>
<feature type="strand" evidence="3">
    <location>
        <begin position="109"/>
        <end position="113"/>
    </location>
</feature>
<feature type="helix" evidence="3">
    <location>
        <begin position="115"/>
        <end position="119"/>
    </location>
</feature>
<feature type="helix" evidence="3">
    <location>
        <begin position="122"/>
        <end position="126"/>
    </location>
</feature>
<feature type="helix" evidence="3">
    <location>
        <begin position="129"/>
        <end position="133"/>
    </location>
</feature>
<feature type="strand" evidence="3">
    <location>
        <begin position="135"/>
        <end position="141"/>
    </location>
</feature>
<feature type="helix" evidence="3">
    <location>
        <begin position="146"/>
        <end position="154"/>
    </location>
</feature>
<feature type="strand" evidence="3">
    <location>
        <begin position="161"/>
        <end position="164"/>
    </location>
</feature>
<feature type="helix" evidence="3">
    <location>
        <begin position="170"/>
        <end position="180"/>
    </location>
</feature>
<feature type="strand" evidence="3">
    <location>
        <begin position="182"/>
        <end position="184"/>
    </location>
</feature>
<feature type="helix" evidence="3">
    <location>
        <begin position="188"/>
        <end position="195"/>
    </location>
</feature>
<feature type="helix" evidence="3">
    <location>
        <begin position="202"/>
        <end position="204"/>
    </location>
</feature>
<feature type="helix" evidence="3">
    <location>
        <begin position="205"/>
        <end position="214"/>
    </location>
</feature>
<feature type="strand" evidence="3">
    <location>
        <begin position="218"/>
        <end position="223"/>
    </location>
</feature>
<feature type="helix" evidence="3">
    <location>
        <begin position="225"/>
        <end position="227"/>
    </location>
</feature>
<feature type="strand" evidence="3">
    <location>
        <begin position="229"/>
        <end position="233"/>
    </location>
</feature>
<feature type="strand" evidence="3">
    <location>
        <begin position="238"/>
        <end position="241"/>
    </location>
</feature>
<feature type="helix" evidence="3">
    <location>
        <begin position="254"/>
        <end position="267"/>
    </location>
</feature>
<feature type="helix" evidence="3">
    <location>
        <begin position="272"/>
        <end position="287"/>
    </location>
</feature>
<feature type="strand" evidence="3">
    <location>
        <begin position="289"/>
        <end position="293"/>
    </location>
</feature>
<feature type="helix" evidence="3">
    <location>
        <begin position="299"/>
        <end position="307"/>
    </location>
</feature>
<name>PSUK_ECOLI</name>
<dbReference type="EC" id="2.7.1.83"/>
<dbReference type="EMBL" id="U00007">
    <property type="protein sequence ID" value="AAA60507.1"/>
    <property type="molecule type" value="Genomic_DNA"/>
</dbReference>
<dbReference type="EMBL" id="U00096">
    <property type="protein sequence ID" value="AAC75227.1"/>
    <property type="molecule type" value="Genomic_DNA"/>
</dbReference>
<dbReference type="EMBL" id="AP009048">
    <property type="protein sequence ID" value="BAE76643.1"/>
    <property type="molecule type" value="Genomic_DNA"/>
</dbReference>
<dbReference type="EMBL" id="M23196">
    <property type="protein sequence ID" value="AAA62625.1"/>
    <property type="molecule type" value="Genomic_DNA"/>
</dbReference>
<dbReference type="PIR" id="E64985">
    <property type="entry name" value="E64985"/>
</dbReference>
<dbReference type="RefSeq" id="NP_416671.1">
    <property type="nucleotide sequence ID" value="NC_000913.3"/>
</dbReference>
<dbReference type="RefSeq" id="WP_001208118.1">
    <property type="nucleotide sequence ID" value="NZ_SSZK01000027.1"/>
</dbReference>
<dbReference type="PDB" id="7VTD">
    <property type="method" value="X-ray"/>
    <property type="resolution" value="2.15 A"/>
    <property type="chains" value="A/B/C/D=1-313"/>
</dbReference>
<dbReference type="PDB" id="7VTE">
    <property type="method" value="X-ray"/>
    <property type="resolution" value="2.15 A"/>
    <property type="chains" value="A/B/C/D=1-313"/>
</dbReference>
<dbReference type="PDB" id="7VTF">
    <property type="method" value="X-ray"/>
    <property type="resolution" value="2.20 A"/>
    <property type="chains" value="A/B/C/D=1-313"/>
</dbReference>
<dbReference type="PDB" id="7VTG">
    <property type="method" value="X-ray"/>
    <property type="resolution" value="1.90 A"/>
    <property type="chains" value="A/B/C/D=1-313"/>
</dbReference>
<dbReference type="PDB" id="7VVA">
    <property type="method" value="X-ray"/>
    <property type="resolution" value="2.75 A"/>
    <property type="chains" value="A/B/C/D/E/F/G/H=1-313"/>
</dbReference>
<dbReference type="PDBsum" id="7VTD"/>
<dbReference type="PDBsum" id="7VTE"/>
<dbReference type="PDBsum" id="7VTF"/>
<dbReference type="PDBsum" id="7VTG"/>
<dbReference type="PDBsum" id="7VVA"/>
<dbReference type="SMR" id="P30235"/>
<dbReference type="BioGRID" id="4260461">
    <property type="interactions" value="27"/>
</dbReference>
<dbReference type="BioGRID" id="851006">
    <property type="interactions" value="1"/>
</dbReference>
<dbReference type="FunCoup" id="P30235">
    <property type="interactions" value="179"/>
</dbReference>
<dbReference type="IntAct" id="P30235">
    <property type="interactions" value="11"/>
</dbReference>
<dbReference type="STRING" id="511145.b2166"/>
<dbReference type="PaxDb" id="511145-b2166"/>
<dbReference type="EnsemblBacteria" id="AAC75227">
    <property type="protein sequence ID" value="AAC75227"/>
    <property type="gene ID" value="b2166"/>
</dbReference>
<dbReference type="GeneID" id="946664"/>
<dbReference type="KEGG" id="ecj:JW2153"/>
<dbReference type="KEGG" id="eco:b2166"/>
<dbReference type="KEGG" id="ecoc:C3026_12135"/>
<dbReference type="PATRIC" id="fig|511145.12.peg.2251"/>
<dbReference type="EchoBASE" id="EB1599"/>
<dbReference type="eggNOG" id="COG0524">
    <property type="taxonomic scope" value="Bacteria"/>
</dbReference>
<dbReference type="HOGENOM" id="CLU_027634_11_2_6"/>
<dbReference type="InParanoid" id="P30235"/>
<dbReference type="OMA" id="GHIMNLM"/>
<dbReference type="OrthoDB" id="9806249at2"/>
<dbReference type="PhylomeDB" id="P30235"/>
<dbReference type="BioCyc" id="EcoCyc:EG11646-MONOMER"/>
<dbReference type="BRENDA" id="2.7.1.83">
    <property type="organism ID" value="2026"/>
</dbReference>
<dbReference type="SABIO-RK" id="P30235"/>
<dbReference type="PRO" id="PR:P30235"/>
<dbReference type="Proteomes" id="UP000000625">
    <property type="component" value="Chromosome"/>
</dbReference>
<dbReference type="GO" id="GO:0005524">
    <property type="term" value="F:ATP binding"/>
    <property type="evidence" value="ECO:0007669"/>
    <property type="project" value="UniProtKB-KW"/>
</dbReference>
<dbReference type="GO" id="GO:0050225">
    <property type="term" value="F:pseudouridine kinase activity"/>
    <property type="evidence" value="ECO:0000314"/>
    <property type="project" value="EcoliWiki"/>
</dbReference>
<dbReference type="CDD" id="cd01941">
    <property type="entry name" value="YeiC_kinase_like"/>
    <property type="match status" value="1"/>
</dbReference>
<dbReference type="FunFam" id="3.40.1190.20:FF:000032">
    <property type="entry name" value="Pseudouridine kinase"/>
    <property type="match status" value="1"/>
</dbReference>
<dbReference type="Gene3D" id="3.40.1190.20">
    <property type="match status" value="1"/>
</dbReference>
<dbReference type="InterPro" id="IPR002173">
    <property type="entry name" value="Carboh/pur_kinase_PfkB_CS"/>
</dbReference>
<dbReference type="InterPro" id="IPR011611">
    <property type="entry name" value="PfkB_dom"/>
</dbReference>
<dbReference type="InterPro" id="IPR029056">
    <property type="entry name" value="Ribokinase-like"/>
</dbReference>
<dbReference type="NCBIfam" id="NF007355">
    <property type="entry name" value="PRK09850.1"/>
    <property type="match status" value="1"/>
</dbReference>
<dbReference type="PANTHER" id="PTHR10584:SF166">
    <property type="entry name" value="RIBOKINASE"/>
    <property type="match status" value="1"/>
</dbReference>
<dbReference type="PANTHER" id="PTHR10584">
    <property type="entry name" value="SUGAR KINASE"/>
    <property type="match status" value="1"/>
</dbReference>
<dbReference type="Pfam" id="PF00294">
    <property type="entry name" value="PfkB"/>
    <property type="match status" value="1"/>
</dbReference>
<dbReference type="SUPFAM" id="SSF53613">
    <property type="entry name" value="Ribokinase-like"/>
    <property type="match status" value="1"/>
</dbReference>
<dbReference type="PROSITE" id="PS00583">
    <property type="entry name" value="PFKB_KINASES_1"/>
    <property type="match status" value="1"/>
</dbReference>
<dbReference type="PROSITE" id="PS00584">
    <property type="entry name" value="PFKB_KINASES_2"/>
    <property type="match status" value="1"/>
</dbReference>
<accession>P30235</accession>
<accession>Q2MAR3</accession>
<gene>
    <name type="primary">psuK</name>
    <name type="synonym">pscK</name>
    <name type="synonym">yeiC</name>
    <name type="ordered locus">b2166</name>
    <name type="ordered locus">JW2153</name>
</gene>
<comment type="function">
    <text evidence="1">Catalyzes the phosphorylation of pseudouridine to pseudouridine 5'-phosphate (PsiMP).</text>
</comment>
<comment type="catalytic activity">
    <reaction evidence="1">
        <text>pseudouridine + ATP = psi-UMP + ADP + H(+)</text>
        <dbReference type="Rhea" id="RHEA:22448"/>
        <dbReference type="ChEBI" id="CHEBI:15378"/>
        <dbReference type="ChEBI" id="CHEBI:17802"/>
        <dbReference type="ChEBI" id="CHEBI:30616"/>
        <dbReference type="ChEBI" id="CHEBI:58380"/>
        <dbReference type="ChEBI" id="CHEBI:456216"/>
        <dbReference type="EC" id="2.7.1.83"/>
    </reaction>
</comment>
<comment type="biophysicochemical properties">
    <kinetics>
        <KM evidence="1">120 uM for pseudouridine (in the presence of 0.5 mM ATP)</KM>
        <KM evidence="1">330 uM for ATP (in the presence of 200 uM pseudouridine)</KM>
    </kinetics>
</comment>
<comment type="similarity">
    <text evidence="2">Belongs to the carbohydrate kinase PfkB family.</text>
</comment>
<organism>
    <name type="scientific">Escherichia coli (strain K12)</name>
    <dbReference type="NCBI Taxonomy" id="83333"/>
    <lineage>
        <taxon>Bacteria</taxon>
        <taxon>Pseudomonadati</taxon>
        <taxon>Pseudomonadota</taxon>
        <taxon>Gammaproteobacteria</taxon>
        <taxon>Enterobacterales</taxon>
        <taxon>Enterobacteriaceae</taxon>
        <taxon>Escherichia</taxon>
    </lineage>
</organism>
<proteinExistence type="evidence at protein level"/>
<reference key="1">
    <citation type="submission" date="1993-10" db="EMBL/GenBank/DDBJ databases">
        <title>Automated multiplex sequencing of the E.coli genome.</title>
        <authorList>
            <person name="Richterich P."/>
            <person name="Lakey N."/>
            <person name="Gryan G."/>
            <person name="Jaehn L."/>
            <person name="Mintz L."/>
            <person name="Robison K."/>
            <person name="Church G.M."/>
        </authorList>
    </citation>
    <scope>NUCLEOTIDE SEQUENCE [LARGE SCALE GENOMIC DNA]</scope>
    <source>
        <strain>K12 / BHB2600</strain>
    </source>
</reference>
<reference key="2">
    <citation type="journal article" date="1997" name="Science">
        <title>The complete genome sequence of Escherichia coli K-12.</title>
        <authorList>
            <person name="Blattner F.R."/>
            <person name="Plunkett G. III"/>
            <person name="Bloch C.A."/>
            <person name="Perna N.T."/>
            <person name="Burland V."/>
            <person name="Riley M."/>
            <person name="Collado-Vides J."/>
            <person name="Glasner J.D."/>
            <person name="Rode C.K."/>
            <person name="Mayhew G.F."/>
            <person name="Gregor J."/>
            <person name="Davis N.W."/>
            <person name="Kirkpatrick H.A."/>
            <person name="Goeden M.A."/>
            <person name="Rose D.J."/>
            <person name="Mau B."/>
            <person name="Shao Y."/>
        </authorList>
    </citation>
    <scope>NUCLEOTIDE SEQUENCE [LARGE SCALE GENOMIC DNA]</scope>
    <source>
        <strain>K12 / MG1655 / ATCC 47076</strain>
    </source>
</reference>
<reference key="3">
    <citation type="journal article" date="2006" name="Mol. Syst. Biol.">
        <title>Highly accurate genome sequences of Escherichia coli K-12 strains MG1655 and W3110.</title>
        <authorList>
            <person name="Hayashi K."/>
            <person name="Morooka N."/>
            <person name="Yamamoto Y."/>
            <person name="Fujita K."/>
            <person name="Isono K."/>
            <person name="Choi S."/>
            <person name="Ohtsubo E."/>
            <person name="Baba T."/>
            <person name="Wanner B.L."/>
            <person name="Mori H."/>
            <person name="Horiuchi T."/>
        </authorList>
    </citation>
    <scope>NUCLEOTIDE SEQUENCE [LARGE SCALE GENOMIC DNA]</scope>
    <source>
        <strain>K12 / W3110 / ATCC 27325 / DSM 5911</strain>
    </source>
</reference>
<reference key="4">
    <citation type="journal article" date="1988" name="J. Gen. Microbiol.">
        <title>Nucleotide sequence of fruA, the gene specifying enzyme IIfru of the phosphoenolpyruvate-dependent sugar phosphotransferase system in Escherichia coli K12.</title>
        <authorList>
            <person name="Prior T.I."/>
            <person name="Kornberg H.L."/>
        </authorList>
    </citation>
    <scope>NUCLEOTIDE SEQUENCE [GENOMIC DNA] OF 1-122</scope>
    <source>
        <strain>K12</strain>
    </source>
</reference>
<reference key="5">
    <citation type="journal article" date="2008" name="J. Biol. Chem.">
        <title>Molecular identification of pseudouridine-metabolizing enzymes.</title>
        <authorList>
            <person name="Preumont A."/>
            <person name="Snoussi K."/>
            <person name="Stroobant V."/>
            <person name="Collet J.-F."/>
            <person name="Van Schaftingen E."/>
        </authorList>
    </citation>
    <scope>FUNCTION</scope>
    <scope>CATALYTIC ACTIVITY</scope>
    <scope>BIOPHYSICOCHEMICAL PROPERTIES</scope>
    <source>
        <strain>K12</strain>
    </source>
</reference>
<sequence>MREKDYVVIIGSANIDVAGYSHESLNYADSNPGKIKFTPGGVGRNIAQNLALLGNKAWLLSAVGSDFYGQSLLTQTNQSGVYVDKCLIVPGENTSSYLSLLDNTGEMLVAINDMNISNAITAEYLAQHGEFIQRAKVIVADCNISEEALAWILDNAANVPVFVDPVSAWKCVKVRDRLNQIHTLKPNRLEAETLSGIALSGREDVAKVAAWFHQHGLNRLVLSMGGDGVYYSDISGESGWSAPIKTNVINVTGAGDAMMAGLASCWVDGMPFAESVRFAQGCSSMALSCEYTNNPDLSIANVISLVENAECLN</sequence>
<protein>
    <recommendedName>
        <fullName>Pseudouridine kinase</fullName>
        <ecNumber>2.7.1.83</ecNumber>
    </recommendedName>
</protein>
<evidence type="ECO:0000269" key="1">
    <source>
    </source>
</evidence>
<evidence type="ECO:0000305" key="2"/>
<evidence type="ECO:0007829" key="3">
    <source>
        <dbReference type="PDB" id="7VTG"/>
    </source>
</evidence>